<gene>
    <name evidence="1" type="primary">psaC</name>
    <name type="ordered locus">ssl0563</name>
</gene>
<organism>
    <name type="scientific">Synechocystis sp. (strain ATCC 27184 / PCC 6803 / Kazusa)</name>
    <dbReference type="NCBI Taxonomy" id="1111708"/>
    <lineage>
        <taxon>Bacteria</taxon>
        <taxon>Bacillati</taxon>
        <taxon>Cyanobacteriota</taxon>
        <taxon>Cyanophyceae</taxon>
        <taxon>Synechococcales</taxon>
        <taxon>Merismopediaceae</taxon>
        <taxon>Synechocystis</taxon>
    </lineage>
</organism>
<reference key="1">
    <citation type="journal article" date="1992" name="Plant Mol. Biol.">
        <title>Identification of a second psaC gene in the cyanobacterium Synechocystis sp. PCC6803.</title>
        <authorList>
            <person name="Steinmueller K."/>
        </authorList>
    </citation>
    <scope>NUCLEOTIDE SEQUENCE [GENOMIC DNA]</scope>
</reference>
<reference key="2">
    <citation type="journal article" date="1995" name="DNA Res.">
        <title>Sequence analysis of the genome of the unicellular cyanobacterium Synechocystis sp. strain PCC6803. I. Sequence features in the 1 Mb region from map positions 64% to 92% of the genome.</title>
        <authorList>
            <person name="Kaneko T."/>
            <person name="Tanaka A."/>
            <person name="Sato S."/>
            <person name="Kotani H."/>
            <person name="Sazuka T."/>
            <person name="Miyajima N."/>
            <person name="Sugiura M."/>
            <person name="Tabata S."/>
        </authorList>
    </citation>
    <scope>NUCLEOTIDE SEQUENCE [LARGE SCALE GENOMIC DNA]</scope>
    <source>
        <strain>ATCC 27184 / PCC 6803 / N-1</strain>
    </source>
</reference>
<reference key="3">
    <citation type="journal article" date="1996" name="DNA Res.">
        <title>Sequence analysis of the genome of the unicellular cyanobacterium Synechocystis sp. strain PCC6803. II. Sequence determination of the entire genome and assignment of potential protein-coding regions.</title>
        <authorList>
            <person name="Kaneko T."/>
            <person name="Sato S."/>
            <person name="Kotani H."/>
            <person name="Tanaka A."/>
            <person name="Asamizu E."/>
            <person name="Nakamura Y."/>
            <person name="Miyajima N."/>
            <person name="Hirosawa M."/>
            <person name="Sugiura M."/>
            <person name="Sasamoto S."/>
            <person name="Kimura T."/>
            <person name="Hosouchi T."/>
            <person name="Matsuno A."/>
            <person name="Muraki A."/>
            <person name="Nakazaki N."/>
            <person name="Naruo K."/>
            <person name="Okumura S."/>
            <person name="Shimpo S."/>
            <person name="Takeuchi C."/>
            <person name="Wada T."/>
            <person name="Watanabe A."/>
            <person name="Yamada M."/>
            <person name="Yasuda M."/>
            <person name="Tabata S."/>
        </authorList>
    </citation>
    <scope>NUCLEOTIDE SEQUENCE [LARGE SCALE GENOMIC DNA]</scope>
    <source>
        <strain>ATCC 27184 / PCC 6803 / Kazusa</strain>
    </source>
</reference>
<reference key="4">
    <citation type="journal article" date="1990" name="FEBS Lett.">
        <title>Amino acid sequence of photosystem I subunit IV from the cyanobacterium Synechocystis PCC 6803.</title>
        <authorList>
            <person name="Rousseau F."/>
            <person name="Lagoutte B."/>
        </authorList>
    </citation>
    <scope>PROTEIN SEQUENCE OF 2-29</scope>
</reference>
<reference key="5">
    <citation type="journal article" date="1997" name="Electrophoresis">
        <title>Towards a proteome project of cyanobacterium Synechocystis sp. strain PCC6803: linking 130 protein spots with their respective genes.</title>
        <authorList>
            <person name="Sazuka T."/>
            <person name="Ohara O."/>
        </authorList>
    </citation>
    <scope>PROTEIN SEQUENCE OF 2-20</scope>
</reference>
<reference key="6">
    <citation type="journal article" date="1995" name="Plant Mol. Biol.">
        <title>Absence of PsaC subunit allows assembly of photosystem I core but prevents the binding of PsaD and PsaE in Synechocystis sp. PCC6803.</title>
        <authorList>
            <person name="Yu J."/>
            <person name="Smart L.B."/>
            <person name="Jung Y.-S."/>
            <person name="Golbeck J.H."/>
            <person name="McIntosh L."/>
        </authorList>
    </citation>
    <scope>FUNCTION</scope>
</reference>
<reference key="7">
    <citation type="journal article" date="1997" name="J. Biol. Chem.">
        <title>Strains of Synechocystis sp. PCC 6803 with altered PsaC. I. Mutations incorporated in the cysteine ligands of the two 4Fe-4S clusters FA and FB of photosystem I.</title>
        <authorList>
            <person name="Yu J."/>
            <person name="Vassiliev I.R."/>
            <person name="Jung Y.-S."/>
            <person name="Golbeck J.H."/>
            <person name="McIntosh L."/>
        </authorList>
    </citation>
    <scope>MUTAGENESIS OF CYS-14 AND CYS-51</scope>
</reference>
<reference key="8">
    <citation type="journal article" date="1997" name="J. Biol. Chem.">
        <title>Strains of Synechocystis sp. PCC 6803 with altered PsaC. II. EPR and optical spectroscopic properties of FA and FB in aspartate, serine, and alanine replacements of cysteines 14 and 51.</title>
        <authorList>
            <person name="Jung Y.-S."/>
            <person name="Vassiliev I.R."/>
            <person name="Yu J."/>
            <person name="McIntosh L."/>
            <person name="Golbeck J.H."/>
        </authorList>
    </citation>
    <scope>MUTAGENESIS OF CYS-14 AND CYS-51</scope>
</reference>
<keyword id="KW-0002">3D-structure</keyword>
<keyword id="KW-0004">4Fe-4S</keyword>
<keyword id="KW-0903">Direct protein sequencing</keyword>
<keyword id="KW-0249">Electron transport</keyword>
<keyword id="KW-0408">Iron</keyword>
<keyword id="KW-0411">Iron-sulfur</keyword>
<keyword id="KW-0472">Membrane</keyword>
<keyword id="KW-0479">Metal-binding</keyword>
<keyword id="KW-0560">Oxidoreductase</keyword>
<keyword id="KW-0602">Photosynthesis</keyword>
<keyword id="KW-0603">Photosystem I</keyword>
<keyword id="KW-1185">Reference proteome</keyword>
<keyword id="KW-0677">Repeat</keyword>
<keyword id="KW-0793">Thylakoid</keyword>
<keyword id="KW-0813">Transport</keyword>
<sequence>MSHSVKIYDTCIGCTQCVRACPLDVLEMVPWDGCKAAQIASSPRTEDCVGCKRCETACPTDFLSIRVYLGAETTRSMGLAY</sequence>
<dbReference type="EC" id="1.97.1.12" evidence="1"/>
<dbReference type="EMBL" id="X65170">
    <property type="protein sequence ID" value="CAA46288.1"/>
    <property type="molecule type" value="Genomic_DNA"/>
</dbReference>
<dbReference type="EMBL" id="BA000022">
    <property type="protein sequence ID" value="BAA10036.1"/>
    <property type="molecule type" value="Genomic_DNA"/>
</dbReference>
<dbReference type="PIR" id="S27984">
    <property type="entry name" value="S27984"/>
</dbReference>
<dbReference type="PDB" id="4KT0">
    <property type="method" value="X-ray"/>
    <property type="resolution" value="2.80 A"/>
    <property type="chains" value="C=1-81"/>
</dbReference>
<dbReference type="PDB" id="4L6V">
    <property type="method" value="X-ray"/>
    <property type="resolution" value="3.80 A"/>
    <property type="chains" value="3/C/c=1-81"/>
</dbReference>
<dbReference type="PDB" id="6HQB">
    <property type="method" value="X-ray"/>
    <property type="resolution" value="4.00 A"/>
    <property type="chains" value="C=2-81"/>
</dbReference>
<dbReference type="PDB" id="6NWA">
    <property type="method" value="EM"/>
    <property type="resolution" value="3.48 A"/>
    <property type="chains" value="C/N/c=1-81"/>
</dbReference>
<dbReference type="PDB" id="6UZV">
    <property type="method" value="EM"/>
    <property type="resolution" value="3.10 A"/>
    <property type="chains" value="3/C/c=1-81"/>
</dbReference>
<dbReference type="PDB" id="7O1V">
    <property type="method" value="EM"/>
    <property type="resolution" value="4.31 A"/>
    <property type="chains" value="C=2-81"/>
</dbReference>
<dbReference type="PDB" id="7UMH">
    <property type="method" value="EM"/>
    <property type="resolution" value="2.60 A"/>
    <property type="chains" value="C/N/c=1-81"/>
</dbReference>
<dbReference type="PDB" id="8AM5">
    <property type="method" value="EM"/>
    <property type="resolution" value="3.10 A"/>
    <property type="chains" value="c=1-81"/>
</dbReference>
<dbReference type="PDB" id="8ASL">
    <property type="method" value="EM"/>
    <property type="resolution" value="3.15 A"/>
    <property type="chains" value="c=1-81"/>
</dbReference>
<dbReference type="PDB" id="8ASP">
    <property type="method" value="EM"/>
    <property type="resolution" value="2.90 A"/>
    <property type="chains" value="c=1-81"/>
</dbReference>
<dbReference type="PDB" id="9AU4">
    <property type="method" value="EM"/>
    <property type="resolution" value="2.03 A"/>
    <property type="chains" value="C/N/c=1-81"/>
</dbReference>
<dbReference type="PDBsum" id="4KT0"/>
<dbReference type="PDBsum" id="4L6V"/>
<dbReference type="PDBsum" id="6HQB"/>
<dbReference type="PDBsum" id="6NWA"/>
<dbReference type="PDBsum" id="6UZV"/>
<dbReference type="PDBsum" id="7O1V"/>
<dbReference type="PDBsum" id="7UMH"/>
<dbReference type="PDBsum" id="8AM5"/>
<dbReference type="PDBsum" id="8ASL"/>
<dbReference type="PDBsum" id="8ASP"/>
<dbReference type="PDBsum" id="9AU4"/>
<dbReference type="EMDB" id="EMD-0524"/>
<dbReference type="EMDB" id="EMD-12697"/>
<dbReference type="EMDB" id="EMD-15522"/>
<dbReference type="EMDB" id="EMD-15618"/>
<dbReference type="EMDB" id="EMD-15621"/>
<dbReference type="EMDB" id="EMD-20963"/>
<dbReference type="EMDB" id="EMD-26601"/>
<dbReference type="EMDB" id="EMD-43843"/>
<dbReference type="SMR" id="P32422"/>
<dbReference type="IntAct" id="P32422">
    <property type="interactions" value="4"/>
</dbReference>
<dbReference type="STRING" id="1148.gene:10499528"/>
<dbReference type="PaxDb" id="1148-1001414"/>
<dbReference type="EnsemblBacteria" id="BAA10036">
    <property type="protein sequence ID" value="BAA10036"/>
    <property type="gene ID" value="BAA10036"/>
</dbReference>
<dbReference type="KEGG" id="syn:ssl0563"/>
<dbReference type="eggNOG" id="COG1143">
    <property type="taxonomic scope" value="Bacteria"/>
</dbReference>
<dbReference type="InParanoid" id="P32422"/>
<dbReference type="PhylomeDB" id="P32422"/>
<dbReference type="BioCyc" id="MetaCyc:PSAC-MONOMER"/>
<dbReference type="BRENDA" id="1.97.1.12">
    <property type="organism ID" value="6192"/>
</dbReference>
<dbReference type="EvolutionaryTrace" id="P32422"/>
<dbReference type="Proteomes" id="UP000001425">
    <property type="component" value="Chromosome"/>
</dbReference>
<dbReference type="GO" id="GO:0009522">
    <property type="term" value="C:photosystem I"/>
    <property type="evidence" value="ECO:0007669"/>
    <property type="project" value="UniProtKB-KW"/>
</dbReference>
<dbReference type="GO" id="GO:0031676">
    <property type="term" value="C:plasma membrane-derived thylakoid membrane"/>
    <property type="evidence" value="ECO:0007669"/>
    <property type="project" value="UniProtKB-SubCell"/>
</dbReference>
<dbReference type="GO" id="GO:0051539">
    <property type="term" value="F:4 iron, 4 sulfur cluster binding"/>
    <property type="evidence" value="ECO:0007669"/>
    <property type="project" value="UniProtKB-KW"/>
</dbReference>
<dbReference type="GO" id="GO:0009055">
    <property type="term" value="F:electron transfer activity"/>
    <property type="evidence" value="ECO:0007669"/>
    <property type="project" value="UniProtKB-UniRule"/>
</dbReference>
<dbReference type="GO" id="GO:0046872">
    <property type="term" value="F:metal ion binding"/>
    <property type="evidence" value="ECO:0007669"/>
    <property type="project" value="UniProtKB-KW"/>
</dbReference>
<dbReference type="GO" id="GO:0016491">
    <property type="term" value="F:oxidoreductase activity"/>
    <property type="evidence" value="ECO:0007669"/>
    <property type="project" value="UniProtKB-KW"/>
</dbReference>
<dbReference type="GO" id="GO:0009773">
    <property type="term" value="P:photosynthetic electron transport in photosystem I"/>
    <property type="evidence" value="ECO:0007669"/>
    <property type="project" value="InterPro"/>
</dbReference>
<dbReference type="FunFam" id="3.30.70.20:FF:000001">
    <property type="entry name" value="Photosystem I iron-sulfur center"/>
    <property type="match status" value="1"/>
</dbReference>
<dbReference type="Gene3D" id="3.30.70.20">
    <property type="match status" value="1"/>
</dbReference>
<dbReference type="HAMAP" id="MF_01303">
    <property type="entry name" value="PSI_PsaC"/>
    <property type="match status" value="1"/>
</dbReference>
<dbReference type="InterPro" id="IPR017896">
    <property type="entry name" value="4Fe4S_Fe-S-bd"/>
</dbReference>
<dbReference type="InterPro" id="IPR017900">
    <property type="entry name" value="4Fe4S_Fe_S_CS"/>
</dbReference>
<dbReference type="InterPro" id="IPR050157">
    <property type="entry name" value="PSI_iron-sulfur_center"/>
</dbReference>
<dbReference type="InterPro" id="IPR017491">
    <property type="entry name" value="PSI_PsaC"/>
</dbReference>
<dbReference type="NCBIfam" id="TIGR03048">
    <property type="entry name" value="PS_I_psaC"/>
    <property type="match status" value="1"/>
</dbReference>
<dbReference type="PANTHER" id="PTHR24960:SF79">
    <property type="entry name" value="PHOTOSYSTEM I IRON-SULFUR CENTER"/>
    <property type="match status" value="1"/>
</dbReference>
<dbReference type="PANTHER" id="PTHR24960">
    <property type="entry name" value="PHOTOSYSTEM I IRON-SULFUR CENTER-RELATED"/>
    <property type="match status" value="1"/>
</dbReference>
<dbReference type="Pfam" id="PF12838">
    <property type="entry name" value="Fer4_7"/>
    <property type="match status" value="1"/>
</dbReference>
<dbReference type="SUPFAM" id="SSF54862">
    <property type="entry name" value="4Fe-4S ferredoxins"/>
    <property type="match status" value="1"/>
</dbReference>
<dbReference type="PROSITE" id="PS00198">
    <property type="entry name" value="4FE4S_FER_1"/>
    <property type="match status" value="2"/>
</dbReference>
<dbReference type="PROSITE" id="PS51379">
    <property type="entry name" value="4FE4S_FER_2"/>
    <property type="match status" value="2"/>
</dbReference>
<comment type="function">
    <text evidence="1 3">Apoprotein for the two 4Fe-4S centers FA and FB of photosystem I (PSI); essential for photochemical activity. FB is the terminal electron acceptor of PSI, donating electrons to ferredoxin. The C-terminus interacts with PsaA/B/D and helps assemble the protein into the PSI complex. Required for binding of PsaD and PsaE to PSI. PSI is a plastocyanin/cytochrome c6-ferredoxin oxidoreductase, converting photonic excitation into a charge separation, which transfers an electron from the donor P700 chlorophyll pair to the spectroscopically characterized acceptors A0, A1, FX, FA and FB in turn.</text>
</comment>
<comment type="function">
    <text evidence="3">Mutant proteins with a 3Fe-4S center are unable to reconstitute PSI activity in vivo.</text>
</comment>
<comment type="catalytic activity">
    <reaction evidence="1">
        <text>reduced [plastocyanin] + hnu + oxidized [2Fe-2S]-[ferredoxin] = oxidized [plastocyanin] + reduced [2Fe-2S]-[ferredoxin]</text>
        <dbReference type="Rhea" id="RHEA:30407"/>
        <dbReference type="Rhea" id="RHEA-COMP:10000"/>
        <dbReference type="Rhea" id="RHEA-COMP:10001"/>
        <dbReference type="Rhea" id="RHEA-COMP:10039"/>
        <dbReference type="Rhea" id="RHEA-COMP:10040"/>
        <dbReference type="ChEBI" id="CHEBI:29036"/>
        <dbReference type="ChEBI" id="CHEBI:30212"/>
        <dbReference type="ChEBI" id="CHEBI:33737"/>
        <dbReference type="ChEBI" id="CHEBI:33738"/>
        <dbReference type="ChEBI" id="CHEBI:49552"/>
        <dbReference type="EC" id="1.97.1.12"/>
    </reaction>
</comment>
<comment type="cofactor">
    <cofactor>
        <name>[4Fe-4S] cluster</name>
        <dbReference type="ChEBI" id="CHEBI:49883"/>
    </cofactor>
    <text>Binds 2 [4Fe-4S] clusters. Cluster 2 is most probably the spectroscopically characterized electron acceptor FA and cluster 1 is most probably FB.</text>
</comment>
<comment type="subunit">
    <text>The cyanobacterial PSI reaction center is composed of one copy each of PsaA,B,C,D,E,F,I,J,K,L,M and X, and forms trimeric complexes.</text>
</comment>
<comment type="subcellular location">
    <subcellularLocation>
        <location>Cellular thylakoid membrane</location>
        <topology>Peripheral membrane protein</topology>
        <orientation>Cytoplasmic side</orientation>
    </subcellularLocation>
</comment>
<comment type="caution">
    <text evidence="7">PubMed:1463835 originally thought that there were two genes for psaC in PCC 6803. However, the first one identified did not originate from PCC 6803 but from N.tabacum. The real psaC gene was therefore incorrectly termed psaC2.</text>
</comment>
<proteinExistence type="evidence at protein level"/>
<evidence type="ECO:0000255" key="1">
    <source>
        <dbReference type="HAMAP-Rule" id="MF_01303"/>
    </source>
</evidence>
<evidence type="ECO:0000269" key="2">
    <source>
    </source>
</evidence>
<evidence type="ECO:0000269" key="3">
    <source>
    </source>
</evidence>
<evidence type="ECO:0000269" key="4">
    <source>
    </source>
</evidence>
<evidence type="ECO:0000269" key="5">
    <source>
    </source>
</evidence>
<evidence type="ECO:0000269" key="6">
    <source>
    </source>
</evidence>
<evidence type="ECO:0000305" key="7"/>
<evidence type="ECO:0007829" key="8">
    <source>
        <dbReference type="PDB" id="4KT0"/>
    </source>
</evidence>
<accession>P32422</accession>
<protein>
    <recommendedName>
        <fullName evidence="1">Photosystem I iron-sulfur center</fullName>
        <ecNumber evidence="1">1.97.1.12</ecNumber>
    </recommendedName>
    <alternativeName>
        <fullName evidence="1">9 kDa polypeptide</fullName>
    </alternativeName>
    <alternativeName>
        <fullName evidence="1">PSI-C</fullName>
    </alternativeName>
    <alternativeName>
        <fullName evidence="1">Photosystem I subunit VII</fullName>
    </alternativeName>
    <alternativeName>
        <fullName evidence="1">PsaC</fullName>
    </alternativeName>
</protein>
<feature type="initiator methionine" description="Removed" evidence="2 6">
    <location>
        <position position="1"/>
    </location>
</feature>
<feature type="chain" id="PRO_0000062025" description="Photosystem I iron-sulfur center">
    <location>
        <begin position="2"/>
        <end position="81"/>
    </location>
</feature>
<feature type="domain" description="4Fe-4S ferredoxin-type 1" evidence="1">
    <location>
        <begin position="2"/>
        <end position="31"/>
    </location>
</feature>
<feature type="domain" description="4Fe-4S ferredoxin-type 2" evidence="1">
    <location>
        <begin position="39"/>
        <end position="68"/>
    </location>
</feature>
<feature type="binding site">
    <location>
        <position position="11"/>
    </location>
    <ligand>
        <name>[4Fe-4S] cluster</name>
        <dbReference type="ChEBI" id="CHEBI:49883"/>
        <label>1</label>
    </ligand>
</feature>
<feature type="binding site">
    <location>
        <position position="14"/>
    </location>
    <ligand>
        <name>[4Fe-4S] cluster</name>
        <dbReference type="ChEBI" id="CHEBI:49883"/>
        <label>1</label>
    </ligand>
</feature>
<feature type="binding site">
    <location>
        <position position="17"/>
    </location>
    <ligand>
        <name>[4Fe-4S] cluster</name>
        <dbReference type="ChEBI" id="CHEBI:49883"/>
        <label>1</label>
    </ligand>
</feature>
<feature type="binding site">
    <location>
        <position position="21"/>
    </location>
    <ligand>
        <name>[4Fe-4S] cluster</name>
        <dbReference type="ChEBI" id="CHEBI:49883"/>
        <label>2</label>
    </ligand>
</feature>
<feature type="binding site">
    <location>
        <position position="48"/>
    </location>
    <ligand>
        <name>[4Fe-4S] cluster</name>
        <dbReference type="ChEBI" id="CHEBI:49883"/>
        <label>2</label>
    </ligand>
</feature>
<feature type="binding site">
    <location>
        <position position="51"/>
    </location>
    <ligand>
        <name>[4Fe-4S] cluster</name>
        <dbReference type="ChEBI" id="CHEBI:49883"/>
        <label>2</label>
    </ligand>
</feature>
<feature type="binding site">
    <location>
        <position position="54"/>
    </location>
    <ligand>
        <name>[4Fe-4S] cluster</name>
        <dbReference type="ChEBI" id="CHEBI:49883"/>
        <label>2</label>
    </ligand>
</feature>
<feature type="binding site">
    <location>
        <position position="58"/>
    </location>
    <ligand>
        <name>[4Fe-4S] cluster</name>
        <dbReference type="ChEBI" id="CHEBI:49883"/>
        <label>1</label>
    </ligand>
</feature>
<feature type="mutagenesis site" description="No detectable PsaC, D or E." evidence="4 5">
    <original>C</original>
    <variation>A</variation>
    <location>
        <position position="14"/>
    </location>
</feature>
<feature type="mutagenesis site" description="Considerably decreases amount of functional PSI, grows mixotrophically only under very low light." evidence="4 5">
    <original>C</original>
    <variation>D</variation>
    <variation>S</variation>
    <location>
        <position position="14"/>
    </location>
</feature>
<feature type="mutagenesis site" description="No detectable PsaC, D or E; when associated with D-51." evidence="4 5">
    <original>C</original>
    <variation>D</variation>
    <location>
        <position position="14"/>
    </location>
</feature>
<feature type="mutagenesis site" description="No detectable PsaC, D or E." evidence="4 5">
    <original>C</original>
    <variation>A</variation>
    <location>
        <position position="51"/>
    </location>
</feature>
<feature type="mutagenesis site" description="Considerably decreases amount of functional PSI, grows mixotrophically only under very low light." evidence="4 5">
    <original>C</original>
    <variation>D</variation>
    <variation>S</variation>
    <location>
        <position position="51"/>
    </location>
</feature>
<feature type="mutagenesis site" description="No detectable PsaC, D or E; when associated with D-14." evidence="4 5">
    <original>C</original>
    <variation>D</variation>
    <location>
        <position position="51"/>
    </location>
</feature>
<feature type="sequence conflict" description="In Ref. 4; AA sequence." evidence="7" ref="4">
    <original>L</original>
    <variation>T</variation>
    <location>
        <position position="23"/>
    </location>
</feature>
<feature type="strand" evidence="8">
    <location>
        <begin position="4"/>
        <end position="8"/>
    </location>
</feature>
<feature type="turn" evidence="8">
    <location>
        <begin position="16"/>
        <end position="20"/>
    </location>
</feature>
<feature type="strand" evidence="8">
    <location>
        <begin position="27"/>
        <end position="30"/>
    </location>
</feature>
<feature type="strand" evidence="8">
    <location>
        <begin position="32"/>
        <end position="34"/>
    </location>
</feature>
<feature type="strand" evidence="8">
    <location>
        <begin position="38"/>
        <end position="41"/>
    </location>
</feature>
<feature type="helix" evidence="8">
    <location>
        <begin position="45"/>
        <end position="47"/>
    </location>
</feature>
<feature type="helix" evidence="8">
    <location>
        <begin position="53"/>
        <end position="57"/>
    </location>
</feature>
<feature type="strand" evidence="8">
    <location>
        <begin position="60"/>
        <end position="62"/>
    </location>
</feature>
<feature type="strand" evidence="8">
    <location>
        <begin position="64"/>
        <end position="68"/>
    </location>
</feature>
<feature type="turn" evidence="8">
    <location>
        <begin position="74"/>
        <end position="78"/>
    </location>
</feature>
<name>PSAC_SYNY3</name>